<feature type="chain" id="PRO_0000230628" description="Large ribosomal subunit protein uL1">
    <location>
        <begin position="1"/>
        <end position="231"/>
    </location>
</feature>
<dbReference type="EMBL" id="CP000058">
    <property type="protein sequence ID" value="AAZ37264.1"/>
    <property type="molecule type" value="Genomic_DNA"/>
</dbReference>
<dbReference type="RefSeq" id="WP_002555499.1">
    <property type="nucleotide sequence ID" value="NC_005773.3"/>
</dbReference>
<dbReference type="SMR" id="Q48D26"/>
<dbReference type="GeneID" id="69861592"/>
<dbReference type="KEGG" id="psp:PSPPH_4602"/>
<dbReference type="eggNOG" id="COG0081">
    <property type="taxonomic scope" value="Bacteria"/>
</dbReference>
<dbReference type="HOGENOM" id="CLU_062853_0_0_6"/>
<dbReference type="Proteomes" id="UP000000551">
    <property type="component" value="Chromosome"/>
</dbReference>
<dbReference type="GO" id="GO:0022625">
    <property type="term" value="C:cytosolic large ribosomal subunit"/>
    <property type="evidence" value="ECO:0007669"/>
    <property type="project" value="TreeGrafter"/>
</dbReference>
<dbReference type="GO" id="GO:0019843">
    <property type="term" value="F:rRNA binding"/>
    <property type="evidence" value="ECO:0007669"/>
    <property type="project" value="UniProtKB-UniRule"/>
</dbReference>
<dbReference type="GO" id="GO:0003735">
    <property type="term" value="F:structural constituent of ribosome"/>
    <property type="evidence" value="ECO:0007669"/>
    <property type="project" value="InterPro"/>
</dbReference>
<dbReference type="GO" id="GO:0000049">
    <property type="term" value="F:tRNA binding"/>
    <property type="evidence" value="ECO:0007669"/>
    <property type="project" value="UniProtKB-KW"/>
</dbReference>
<dbReference type="GO" id="GO:0006417">
    <property type="term" value="P:regulation of translation"/>
    <property type="evidence" value="ECO:0007669"/>
    <property type="project" value="UniProtKB-KW"/>
</dbReference>
<dbReference type="GO" id="GO:0006412">
    <property type="term" value="P:translation"/>
    <property type="evidence" value="ECO:0007669"/>
    <property type="project" value="UniProtKB-UniRule"/>
</dbReference>
<dbReference type="CDD" id="cd00403">
    <property type="entry name" value="Ribosomal_L1"/>
    <property type="match status" value="1"/>
</dbReference>
<dbReference type="FunFam" id="3.40.50.790:FF:000001">
    <property type="entry name" value="50S ribosomal protein L1"/>
    <property type="match status" value="1"/>
</dbReference>
<dbReference type="Gene3D" id="3.30.190.20">
    <property type="match status" value="1"/>
</dbReference>
<dbReference type="Gene3D" id="3.40.50.790">
    <property type="match status" value="1"/>
</dbReference>
<dbReference type="HAMAP" id="MF_01318_B">
    <property type="entry name" value="Ribosomal_uL1_B"/>
    <property type="match status" value="1"/>
</dbReference>
<dbReference type="InterPro" id="IPR005878">
    <property type="entry name" value="Ribosom_uL1_bac-type"/>
</dbReference>
<dbReference type="InterPro" id="IPR002143">
    <property type="entry name" value="Ribosomal_uL1"/>
</dbReference>
<dbReference type="InterPro" id="IPR023674">
    <property type="entry name" value="Ribosomal_uL1-like"/>
</dbReference>
<dbReference type="InterPro" id="IPR028364">
    <property type="entry name" value="Ribosomal_uL1/biogenesis"/>
</dbReference>
<dbReference type="InterPro" id="IPR016095">
    <property type="entry name" value="Ribosomal_uL1_3-a/b-sand"/>
</dbReference>
<dbReference type="InterPro" id="IPR023673">
    <property type="entry name" value="Ribosomal_uL1_CS"/>
</dbReference>
<dbReference type="NCBIfam" id="TIGR01169">
    <property type="entry name" value="rplA_bact"/>
    <property type="match status" value="1"/>
</dbReference>
<dbReference type="PANTHER" id="PTHR36427">
    <property type="entry name" value="54S RIBOSOMAL PROTEIN L1, MITOCHONDRIAL"/>
    <property type="match status" value="1"/>
</dbReference>
<dbReference type="PANTHER" id="PTHR36427:SF3">
    <property type="entry name" value="LARGE RIBOSOMAL SUBUNIT PROTEIN UL1M"/>
    <property type="match status" value="1"/>
</dbReference>
<dbReference type="Pfam" id="PF00687">
    <property type="entry name" value="Ribosomal_L1"/>
    <property type="match status" value="1"/>
</dbReference>
<dbReference type="PIRSF" id="PIRSF002155">
    <property type="entry name" value="Ribosomal_L1"/>
    <property type="match status" value="1"/>
</dbReference>
<dbReference type="SUPFAM" id="SSF56808">
    <property type="entry name" value="Ribosomal protein L1"/>
    <property type="match status" value="1"/>
</dbReference>
<dbReference type="PROSITE" id="PS01199">
    <property type="entry name" value="RIBOSOMAL_L1"/>
    <property type="match status" value="1"/>
</dbReference>
<proteinExistence type="inferred from homology"/>
<organism>
    <name type="scientific">Pseudomonas savastanoi pv. phaseolicola (strain 1448A / Race 6)</name>
    <name type="common">Pseudomonas syringae pv. phaseolicola (strain 1448A / Race 6)</name>
    <dbReference type="NCBI Taxonomy" id="264730"/>
    <lineage>
        <taxon>Bacteria</taxon>
        <taxon>Pseudomonadati</taxon>
        <taxon>Pseudomonadota</taxon>
        <taxon>Gammaproteobacteria</taxon>
        <taxon>Pseudomonadales</taxon>
        <taxon>Pseudomonadaceae</taxon>
        <taxon>Pseudomonas</taxon>
    </lineage>
</organism>
<keyword id="KW-0678">Repressor</keyword>
<keyword id="KW-0687">Ribonucleoprotein</keyword>
<keyword id="KW-0689">Ribosomal protein</keyword>
<keyword id="KW-0694">RNA-binding</keyword>
<keyword id="KW-0699">rRNA-binding</keyword>
<keyword id="KW-0810">Translation regulation</keyword>
<keyword id="KW-0820">tRNA-binding</keyword>
<accession>Q48D26</accession>
<sequence>MAKLTKRQKAIASKIEAGKSYNFVDAAALLTELSTVKFSESVDVAVNLGVDPRKSDQVVRSATVLPHGTGKTVRVAVFTQGPAAEAALAAGADRVGMDDLAAEMKAGDLNYDVVIASPDAMRVVGQLGQVLGPRGLMPNPKVGTVTPDVANAVKNAKAGQVRYRTDKNGIIHTSVGKVGFDAVKLKENVEALIADLKRIKPASSKGIYVKRITLSTTMGPGLVIDQGSLEA</sequence>
<comment type="function">
    <text evidence="1">Binds directly to 23S rRNA. The L1 stalk is quite mobile in the ribosome, and is involved in E site tRNA release.</text>
</comment>
<comment type="function">
    <text evidence="1">Protein L1 is also a translational repressor protein, it controls the translation of the L11 operon by binding to its mRNA.</text>
</comment>
<comment type="subunit">
    <text evidence="1">Part of the 50S ribosomal subunit.</text>
</comment>
<comment type="similarity">
    <text evidence="1">Belongs to the universal ribosomal protein uL1 family.</text>
</comment>
<protein>
    <recommendedName>
        <fullName evidence="1">Large ribosomal subunit protein uL1</fullName>
    </recommendedName>
    <alternativeName>
        <fullName evidence="2">50S ribosomal protein L1</fullName>
    </alternativeName>
</protein>
<reference key="1">
    <citation type="journal article" date="2005" name="J. Bacteriol.">
        <title>Whole-genome sequence analysis of Pseudomonas syringae pv. phaseolicola 1448A reveals divergence among pathovars in genes involved in virulence and transposition.</title>
        <authorList>
            <person name="Joardar V."/>
            <person name="Lindeberg M."/>
            <person name="Jackson R.W."/>
            <person name="Selengut J."/>
            <person name="Dodson R."/>
            <person name="Brinkac L.M."/>
            <person name="Daugherty S.C."/>
            <person name="DeBoy R.T."/>
            <person name="Durkin A.S."/>
            <person name="Gwinn Giglio M."/>
            <person name="Madupu R."/>
            <person name="Nelson W.C."/>
            <person name="Rosovitz M.J."/>
            <person name="Sullivan S.A."/>
            <person name="Crabtree J."/>
            <person name="Creasy T."/>
            <person name="Davidsen T.M."/>
            <person name="Haft D.H."/>
            <person name="Zafar N."/>
            <person name="Zhou L."/>
            <person name="Halpin R."/>
            <person name="Holley T."/>
            <person name="Khouri H.M."/>
            <person name="Feldblyum T.V."/>
            <person name="White O."/>
            <person name="Fraser C.M."/>
            <person name="Chatterjee A.K."/>
            <person name="Cartinhour S."/>
            <person name="Schneider D."/>
            <person name="Mansfield J.W."/>
            <person name="Collmer A."/>
            <person name="Buell R."/>
        </authorList>
    </citation>
    <scope>NUCLEOTIDE SEQUENCE [LARGE SCALE GENOMIC DNA]</scope>
    <source>
        <strain>1448A / Race 6</strain>
    </source>
</reference>
<gene>
    <name evidence="1" type="primary">rplA</name>
    <name type="ordered locus">PSPPH_4602</name>
</gene>
<evidence type="ECO:0000255" key="1">
    <source>
        <dbReference type="HAMAP-Rule" id="MF_01318"/>
    </source>
</evidence>
<evidence type="ECO:0000305" key="2"/>
<name>RL1_PSE14</name>